<proteinExistence type="inferred from homology"/>
<keyword id="KW-1185">Reference proteome</keyword>
<accession>Q86I14</accession>
<accession>Q554E1</accession>
<evidence type="ECO:0000250" key="1">
    <source>
        <dbReference type="UniProtKB" id="Q86VX2"/>
    </source>
</evidence>
<evidence type="ECO:0000255" key="2">
    <source>
        <dbReference type="PROSITE-ProRule" id="PRU00602"/>
    </source>
</evidence>
<evidence type="ECO:0000305" key="3"/>
<sequence length="209" mass="24396">MVFRFLGNNNNNNNELPDQQLINEIGYLSNFSNEQLEQLLDIIFEFMIIQKSEQLLNQIQEFSNEHSINENTLKNIIRGCIIFFKSSAKNNLTIDHLREDCIQFKLDEEQSKLVSTKYKQHYIEISRSLVGNSLTINQVLDMQWRFGVTTSSSEFTKSNTTGSTFLQLKLVLDKGNNIKEDVHMELTLPQFYEFLKEMQSAKASLEYFN</sequence>
<comment type="function">
    <text evidence="1">Scaffold protein in the commander complex that is essential for endosomal recycling of transmembrane cargos; the commander complex is composed of the CCC subcomplex and the retriever subcomplex.</text>
</comment>
<comment type="subunit">
    <text evidence="1">Component of the commander complex consisting of the CCC subcomplex and the retriever subcomplex (By similarity). Component of the CCC subcomplex (By similarity).</text>
</comment>
<comment type="similarity">
    <text evidence="3">Belongs to the COMM domain-containing protein 7 family.</text>
</comment>
<gene>
    <name type="primary">commd7</name>
    <name type="ORF">DDB_G0275055</name>
</gene>
<name>COMD7_DICDI</name>
<dbReference type="EMBL" id="AAFI02000013">
    <property type="protein sequence ID" value="EAL69808.1"/>
    <property type="molecule type" value="Genomic_DNA"/>
</dbReference>
<dbReference type="RefSeq" id="XP_643770.1">
    <property type="nucleotide sequence ID" value="XM_638678.1"/>
</dbReference>
<dbReference type="SMR" id="Q86I14"/>
<dbReference type="FunCoup" id="Q86I14">
    <property type="interactions" value="8"/>
</dbReference>
<dbReference type="STRING" id="44689.Q86I14"/>
<dbReference type="PaxDb" id="44689-DDB0266458"/>
<dbReference type="EnsemblProtists" id="EAL69808">
    <property type="protein sequence ID" value="EAL69808"/>
    <property type="gene ID" value="DDB_G0275055"/>
</dbReference>
<dbReference type="GeneID" id="8619815"/>
<dbReference type="KEGG" id="ddi:DDB_G0275055"/>
<dbReference type="dictyBase" id="DDB_G0275055">
    <property type="gene designation" value="commd7"/>
</dbReference>
<dbReference type="VEuPathDB" id="AmoebaDB:DDB_G0275055"/>
<dbReference type="eggNOG" id="ENOG502QQ17">
    <property type="taxonomic scope" value="Eukaryota"/>
</dbReference>
<dbReference type="HOGENOM" id="CLU_118172_0_0_1"/>
<dbReference type="InParanoid" id="Q86I14"/>
<dbReference type="OMA" id="SQQWGEH"/>
<dbReference type="PhylomeDB" id="Q86I14"/>
<dbReference type="Reactome" id="R-DDI-8951664">
    <property type="pathway name" value="Neddylation"/>
</dbReference>
<dbReference type="PRO" id="PR:Q86I14"/>
<dbReference type="Proteomes" id="UP000002195">
    <property type="component" value="Chromosome 2"/>
</dbReference>
<dbReference type="GO" id="GO:0051059">
    <property type="term" value="F:NF-kappaB binding"/>
    <property type="evidence" value="ECO:0000318"/>
    <property type="project" value="GO_Central"/>
</dbReference>
<dbReference type="GO" id="GO:0033209">
    <property type="term" value="P:tumor necrosis factor-mediated signaling pathway"/>
    <property type="evidence" value="ECO:0000318"/>
    <property type="project" value="GO_Central"/>
</dbReference>
<dbReference type="CDD" id="cd04755">
    <property type="entry name" value="Commd7"/>
    <property type="match status" value="1"/>
</dbReference>
<dbReference type="InterPro" id="IPR017920">
    <property type="entry name" value="COMM"/>
</dbReference>
<dbReference type="InterPro" id="IPR047155">
    <property type="entry name" value="COMMD4/6/7/8"/>
</dbReference>
<dbReference type="InterPro" id="IPR037358">
    <property type="entry name" value="COMMD7"/>
</dbReference>
<dbReference type="PANTHER" id="PTHR16231">
    <property type="entry name" value="COMM DOMAIN-CONTAINING PROTEIN 4-8 FAMILY MEMBER"/>
    <property type="match status" value="1"/>
</dbReference>
<dbReference type="PANTHER" id="PTHR16231:SF2">
    <property type="entry name" value="COMM DOMAIN-CONTAINING PROTEIN 7"/>
    <property type="match status" value="1"/>
</dbReference>
<dbReference type="Pfam" id="PF07258">
    <property type="entry name" value="COMM_domain"/>
    <property type="match status" value="1"/>
</dbReference>
<dbReference type="Pfam" id="PF21672">
    <property type="entry name" value="COMM_HN"/>
    <property type="match status" value="1"/>
</dbReference>
<dbReference type="PROSITE" id="PS51269">
    <property type="entry name" value="COMM"/>
    <property type="match status" value="1"/>
</dbReference>
<organism>
    <name type="scientific">Dictyostelium discoideum</name>
    <name type="common">Social amoeba</name>
    <dbReference type="NCBI Taxonomy" id="44689"/>
    <lineage>
        <taxon>Eukaryota</taxon>
        <taxon>Amoebozoa</taxon>
        <taxon>Evosea</taxon>
        <taxon>Eumycetozoa</taxon>
        <taxon>Dictyostelia</taxon>
        <taxon>Dictyosteliales</taxon>
        <taxon>Dictyosteliaceae</taxon>
        <taxon>Dictyostelium</taxon>
    </lineage>
</organism>
<protein>
    <recommendedName>
        <fullName>COMM domain-containing protein 7</fullName>
    </recommendedName>
</protein>
<reference key="1">
    <citation type="journal article" date="2002" name="Nature">
        <title>Sequence and analysis of chromosome 2 of Dictyostelium discoideum.</title>
        <authorList>
            <person name="Gloeckner G."/>
            <person name="Eichinger L."/>
            <person name="Szafranski K."/>
            <person name="Pachebat J.A."/>
            <person name="Bankier A.T."/>
            <person name="Dear P.H."/>
            <person name="Lehmann R."/>
            <person name="Baumgart C."/>
            <person name="Parra G."/>
            <person name="Abril J.F."/>
            <person name="Guigo R."/>
            <person name="Kumpf K."/>
            <person name="Tunggal B."/>
            <person name="Cox E.C."/>
            <person name="Quail M.A."/>
            <person name="Platzer M."/>
            <person name="Rosenthal A."/>
            <person name="Noegel A.A."/>
        </authorList>
    </citation>
    <scope>NUCLEOTIDE SEQUENCE [LARGE SCALE GENOMIC DNA]</scope>
    <source>
        <strain>AX4</strain>
    </source>
</reference>
<reference key="2">
    <citation type="journal article" date="2005" name="Nature">
        <title>The genome of the social amoeba Dictyostelium discoideum.</title>
        <authorList>
            <person name="Eichinger L."/>
            <person name="Pachebat J.A."/>
            <person name="Gloeckner G."/>
            <person name="Rajandream M.A."/>
            <person name="Sucgang R."/>
            <person name="Berriman M."/>
            <person name="Song J."/>
            <person name="Olsen R."/>
            <person name="Szafranski K."/>
            <person name="Xu Q."/>
            <person name="Tunggal B."/>
            <person name="Kummerfeld S."/>
            <person name="Madera M."/>
            <person name="Konfortov B.A."/>
            <person name="Rivero F."/>
            <person name="Bankier A.T."/>
            <person name="Lehmann R."/>
            <person name="Hamlin N."/>
            <person name="Davies R."/>
            <person name="Gaudet P."/>
            <person name="Fey P."/>
            <person name="Pilcher K."/>
            <person name="Chen G."/>
            <person name="Saunders D."/>
            <person name="Sodergren E.J."/>
            <person name="Davis P."/>
            <person name="Kerhornou A."/>
            <person name="Nie X."/>
            <person name="Hall N."/>
            <person name="Anjard C."/>
            <person name="Hemphill L."/>
            <person name="Bason N."/>
            <person name="Farbrother P."/>
            <person name="Desany B."/>
            <person name="Just E."/>
            <person name="Morio T."/>
            <person name="Rost R."/>
            <person name="Churcher C.M."/>
            <person name="Cooper J."/>
            <person name="Haydock S."/>
            <person name="van Driessche N."/>
            <person name="Cronin A."/>
            <person name="Goodhead I."/>
            <person name="Muzny D.M."/>
            <person name="Mourier T."/>
            <person name="Pain A."/>
            <person name="Lu M."/>
            <person name="Harper D."/>
            <person name="Lindsay R."/>
            <person name="Hauser H."/>
            <person name="James K.D."/>
            <person name="Quiles M."/>
            <person name="Madan Babu M."/>
            <person name="Saito T."/>
            <person name="Buchrieser C."/>
            <person name="Wardroper A."/>
            <person name="Felder M."/>
            <person name="Thangavelu M."/>
            <person name="Johnson D."/>
            <person name="Knights A."/>
            <person name="Loulseged H."/>
            <person name="Mungall K.L."/>
            <person name="Oliver K."/>
            <person name="Price C."/>
            <person name="Quail M.A."/>
            <person name="Urushihara H."/>
            <person name="Hernandez J."/>
            <person name="Rabbinowitsch E."/>
            <person name="Steffen D."/>
            <person name="Sanders M."/>
            <person name="Ma J."/>
            <person name="Kohara Y."/>
            <person name="Sharp S."/>
            <person name="Simmonds M.N."/>
            <person name="Spiegler S."/>
            <person name="Tivey A."/>
            <person name="Sugano S."/>
            <person name="White B."/>
            <person name="Walker D."/>
            <person name="Woodward J.R."/>
            <person name="Winckler T."/>
            <person name="Tanaka Y."/>
            <person name="Shaulsky G."/>
            <person name="Schleicher M."/>
            <person name="Weinstock G.M."/>
            <person name="Rosenthal A."/>
            <person name="Cox E.C."/>
            <person name="Chisholm R.L."/>
            <person name="Gibbs R.A."/>
            <person name="Loomis W.F."/>
            <person name="Platzer M."/>
            <person name="Kay R.R."/>
            <person name="Williams J.G."/>
            <person name="Dear P.H."/>
            <person name="Noegel A.A."/>
            <person name="Barrell B.G."/>
            <person name="Kuspa A."/>
        </authorList>
    </citation>
    <scope>NUCLEOTIDE SEQUENCE [LARGE SCALE GENOMIC DNA]</scope>
    <source>
        <strain>AX4</strain>
    </source>
</reference>
<feature type="chain" id="PRO_0000327466" description="COMM domain-containing protein 7">
    <location>
        <begin position="1"/>
        <end position="209"/>
    </location>
</feature>
<feature type="domain" description="COMM" evidence="2">
    <location>
        <begin position="138"/>
        <end position="209"/>
    </location>
</feature>